<dbReference type="EMBL" id="U18658">
    <property type="protein sequence ID" value="AAA86825.1"/>
    <property type="molecule type" value="mRNA"/>
</dbReference>
<dbReference type="EMBL" id="BC027533">
    <property type="protein sequence ID" value="AAH27533.1"/>
    <property type="molecule type" value="mRNA"/>
</dbReference>
<dbReference type="EMBL" id="U20164">
    <property type="protein sequence ID" value="AAB48215.1"/>
    <property type="molecule type" value="Genomic_DNA"/>
</dbReference>
<dbReference type="CCDS" id="CCDS16878.1"/>
<dbReference type="RefSeq" id="NP_033354.2">
    <property type="nucleotide sequence ID" value="NM_009328.2"/>
</dbReference>
<dbReference type="SMR" id="Q60756"/>
<dbReference type="BioGRID" id="204001">
    <property type="interactions" value="2"/>
</dbReference>
<dbReference type="FunCoup" id="Q60756">
    <property type="interactions" value="945"/>
</dbReference>
<dbReference type="STRING" id="10090.ENSMUSP00000086511"/>
<dbReference type="iPTMnet" id="Q60756"/>
<dbReference type="PhosphoSitePlus" id="Q60756"/>
<dbReference type="jPOST" id="Q60756"/>
<dbReference type="PaxDb" id="10090-ENSMUSP00000086511"/>
<dbReference type="ProteomicsDB" id="263145"/>
<dbReference type="Antibodypedia" id="6289">
    <property type="antibodies" value="103 antibodies from 20 providers"/>
</dbReference>
<dbReference type="DNASU" id="21407"/>
<dbReference type="Ensembl" id="ENSMUST00000089112.6">
    <property type="protein sequence ID" value="ENSMUSP00000086511.6"/>
    <property type="gene ID" value="ENSMUSG00000068079.6"/>
</dbReference>
<dbReference type="GeneID" id="21407"/>
<dbReference type="KEGG" id="mmu:21407"/>
<dbReference type="UCSC" id="uc008nex.1">
    <property type="organism name" value="mouse"/>
</dbReference>
<dbReference type="AGR" id="MGI:104664"/>
<dbReference type="CTD" id="6939"/>
<dbReference type="MGI" id="MGI:104664">
    <property type="gene designation" value="Tcf15"/>
</dbReference>
<dbReference type="VEuPathDB" id="HostDB:ENSMUSG00000068079"/>
<dbReference type="eggNOG" id="KOG4029">
    <property type="taxonomic scope" value="Eukaryota"/>
</dbReference>
<dbReference type="GeneTree" id="ENSGT00940000161320"/>
<dbReference type="HOGENOM" id="CLU_115077_0_0_1"/>
<dbReference type="InParanoid" id="Q60756"/>
<dbReference type="OMA" id="HRTQNVN"/>
<dbReference type="OrthoDB" id="6106870at2759"/>
<dbReference type="PhylomeDB" id="Q60756"/>
<dbReference type="TreeFam" id="TF315153"/>
<dbReference type="BioGRID-ORCS" id="21407">
    <property type="hits" value="2 hits in 78 CRISPR screens"/>
</dbReference>
<dbReference type="ChiTaRS" id="Tcf15">
    <property type="organism name" value="mouse"/>
</dbReference>
<dbReference type="PRO" id="PR:Q60756"/>
<dbReference type="Proteomes" id="UP000000589">
    <property type="component" value="Chromosome 2"/>
</dbReference>
<dbReference type="RNAct" id="Q60756">
    <property type="molecule type" value="protein"/>
</dbReference>
<dbReference type="Bgee" id="ENSMUSG00000068079">
    <property type="expression patterns" value="Expressed in head paraxial mesoderm and 135 other cell types or tissues"/>
</dbReference>
<dbReference type="GO" id="GO:0005634">
    <property type="term" value="C:nucleus"/>
    <property type="evidence" value="ECO:0000315"/>
    <property type="project" value="UniProtKB"/>
</dbReference>
<dbReference type="GO" id="GO:0090575">
    <property type="term" value="C:RNA polymerase II transcription regulator complex"/>
    <property type="evidence" value="ECO:0000314"/>
    <property type="project" value="NTNU_SB"/>
</dbReference>
<dbReference type="GO" id="GO:0043425">
    <property type="term" value="F:bHLH transcription factor binding"/>
    <property type="evidence" value="ECO:0000353"/>
    <property type="project" value="UniProtKB"/>
</dbReference>
<dbReference type="GO" id="GO:0000981">
    <property type="term" value="F:DNA-binding transcription factor activity, RNA polymerase II-specific"/>
    <property type="evidence" value="ECO:0000314"/>
    <property type="project" value="UniProtKB"/>
</dbReference>
<dbReference type="GO" id="GO:0070888">
    <property type="term" value="F:E-box binding"/>
    <property type="evidence" value="ECO:0000314"/>
    <property type="project" value="UniProtKB"/>
</dbReference>
<dbReference type="GO" id="GO:0046983">
    <property type="term" value="F:protein dimerization activity"/>
    <property type="evidence" value="ECO:0007669"/>
    <property type="project" value="InterPro"/>
</dbReference>
<dbReference type="GO" id="GO:0009952">
    <property type="term" value="P:anterior/posterior pattern specification"/>
    <property type="evidence" value="ECO:0000315"/>
    <property type="project" value="MGI"/>
</dbReference>
<dbReference type="GO" id="GO:0043583">
    <property type="term" value="P:ear development"/>
    <property type="evidence" value="ECO:0000315"/>
    <property type="project" value="MGI"/>
</dbReference>
<dbReference type="GO" id="GO:0045198">
    <property type="term" value="P:establishment of epithelial cell apical/basal polarity"/>
    <property type="evidence" value="ECO:0000315"/>
    <property type="project" value="MGI"/>
</dbReference>
<dbReference type="GO" id="GO:0060231">
    <property type="term" value="P:mesenchymal to epithelial transition"/>
    <property type="evidence" value="ECO:0000315"/>
    <property type="project" value="MGI"/>
</dbReference>
<dbReference type="GO" id="GO:0007517">
    <property type="term" value="P:muscle organ development"/>
    <property type="evidence" value="ECO:0000315"/>
    <property type="project" value="MGI"/>
</dbReference>
<dbReference type="GO" id="GO:0048644">
    <property type="term" value="P:muscle organ morphogenesis"/>
    <property type="evidence" value="ECO:0000315"/>
    <property type="project" value="MGI"/>
</dbReference>
<dbReference type="GO" id="GO:1902037">
    <property type="term" value="P:negative regulation of hematopoietic stem cell differentiation"/>
    <property type="evidence" value="ECO:0000314"/>
    <property type="project" value="UniProtKB"/>
</dbReference>
<dbReference type="GO" id="GO:0050884">
    <property type="term" value="P:neuromuscular process controlling posture"/>
    <property type="evidence" value="ECO:0000315"/>
    <property type="project" value="MGI"/>
</dbReference>
<dbReference type="GO" id="GO:0048339">
    <property type="term" value="P:paraxial mesoderm development"/>
    <property type="evidence" value="ECO:0000315"/>
    <property type="project" value="MGI"/>
</dbReference>
<dbReference type="GO" id="GO:2000738">
    <property type="term" value="P:positive regulation of stem cell differentiation"/>
    <property type="evidence" value="ECO:0000315"/>
    <property type="project" value="UniProtKB"/>
</dbReference>
<dbReference type="GO" id="GO:0045944">
    <property type="term" value="P:positive regulation of transcription by RNA polymerase II"/>
    <property type="evidence" value="ECO:0000314"/>
    <property type="project" value="UniProtKB"/>
</dbReference>
<dbReference type="GO" id="GO:0036342">
    <property type="term" value="P:post-anal tail morphogenesis"/>
    <property type="evidence" value="ECO:0000315"/>
    <property type="project" value="MGI"/>
</dbReference>
<dbReference type="GO" id="GO:1903053">
    <property type="term" value="P:regulation of extracellular matrix organization"/>
    <property type="evidence" value="ECO:0000315"/>
    <property type="project" value="MGI"/>
</dbReference>
<dbReference type="GO" id="GO:0010468">
    <property type="term" value="P:regulation of gene expression"/>
    <property type="evidence" value="ECO:0000315"/>
    <property type="project" value="MGI"/>
</dbReference>
<dbReference type="GO" id="GO:0003016">
    <property type="term" value="P:respiratory system process"/>
    <property type="evidence" value="ECO:0000315"/>
    <property type="project" value="MGI"/>
</dbReference>
<dbReference type="GO" id="GO:0048705">
    <property type="term" value="P:skeletal system morphogenesis"/>
    <property type="evidence" value="ECO:0000315"/>
    <property type="project" value="MGI"/>
</dbReference>
<dbReference type="GO" id="GO:0001756">
    <property type="term" value="P:somitogenesis"/>
    <property type="evidence" value="ECO:0000315"/>
    <property type="project" value="MGI"/>
</dbReference>
<dbReference type="GO" id="GO:0019827">
    <property type="term" value="P:stem cell population maintenance"/>
    <property type="evidence" value="ECO:0000314"/>
    <property type="project" value="UniProtKB"/>
</dbReference>
<dbReference type="CDD" id="cd11470">
    <property type="entry name" value="bHLH_TS_TCF15_paraxis"/>
    <property type="match status" value="1"/>
</dbReference>
<dbReference type="FunFam" id="4.10.280.10:FF:000010">
    <property type="entry name" value="Scleraxis bHLH transcription factor"/>
    <property type="match status" value="1"/>
</dbReference>
<dbReference type="Gene3D" id="4.10.280.10">
    <property type="entry name" value="Helix-loop-helix DNA-binding domain"/>
    <property type="match status" value="1"/>
</dbReference>
<dbReference type="InterPro" id="IPR011598">
    <property type="entry name" value="bHLH_dom"/>
</dbReference>
<dbReference type="InterPro" id="IPR050283">
    <property type="entry name" value="E-box_TF_Regulators"/>
</dbReference>
<dbReference type="InterPro" id="IPR036638">
    <property type="entry name" value="HLH_DNA-bd_sf"/>
</dbReference>
<dbReference type="PANTHER" id="PTHR23349">
    <property type="entry name" value="BASIC HELIX-LOOP-HELIX TRANSCRIPTION FACTOR, TWIST"/>
    <property type="match status" value="1"/>
</dbReference>
<dbReference type="PANTHER" id="PTHR23349:SF4">
    <property type="entry name" value="TRANSCRIPTION FACTOR 15"/>
    <property type="match status" value="1"/>
</dbReference>
<dbReference type="Pfam" id="PF00010">
    <property type="entry name" value="HLH"/>
    <property type="match status" value="1"/>
</dbReference>
<dbReference type="SMART" id="SM00353">
    <property type="entry name" value="HLH"/>
    <property type="match status" value="1"/>
</dbReference>
<dbReference type="SUPFAM" id="SSF47459">
    <property type="entry name" value="HLH, helix-loop-helix DNA-binding domain"/>
    <property type="match status" value="1"/>
</dbReference>
<dbReference type="PROSITE" id="PS50888">
    <property type="entry name" value="BHLH"/>
    <property type="match status" value="1"/>
</dbReference>
<feature type="chain" id="PRO_0000127462" description="Transcription factor 15">
    <location>
        <begin position="1"/>
        <end position="195"/>
    </location>
</feature>
<feature type="domain" description="bHLH" evidence="1">
    <location>
        <begin position="70"/>
        <end position="122"/>
    </location>
</feature>
<feature type="region of interest" description="Disordered" evidence="2">
    <location>
        <begin position="44"/>
        <end position="65"/>
    </location>
</feature>
<feature type="compositionally biased region" description="Low complexity" evidence="2">
    <location>
        <begin position="56"/>
        <end position="65"/>
    </location>
</feature>
<feature type="modified residue" description="Phosphoserine" evidence="17">
    <location>
        <position position="60"/>
    </location>
</feature>
<feature type="mutagenesis site" description="Does not affect formation of a heterodimer with TCF3 and ability to bind DNA." evidence="3">
    <original>RQ</original>
    <variation>KK</variation>
    <location>
        <begin position="70"/>
        <end position="71"/>
    </location>
</feature>
<feature type="mutagenesis site" description="Does not affect formation of a heterodimer with TCF3 and ability to bind DNA." evidence="3">
    <original>A</original>
    <variation>N</variation>
    <location>
        <position position="75"/>
    </location>
</feature>
<feature type="mutagenesis site" description="Impaired formation of a heterodimer with TCF3 and decreased ability to bind DNA." evidence="3">
    <original>F</original>
    <variation>P</variation>
    <location>
        <position position="90"/>
    </location>
</feature>
<feature type="sequence conflict" description="In Ref. 1; AAA86825." evidence="15" ref="1">
    <original>DA</original>
    <variation>ELT</variation>
    <location>
        <begin position="130"/>
        <end position="131"/>
    </location>
</feature>
<reference key="1">
    <citation type="journal article" date="1995" name="Dev. Biol.">
        <title>Paraxis: a basic helix-loop-helix protein expressed in paraxial mesoderm and developing somites.</title>
        <authorList>
            <person name="Burgess R."/>
            <person name="Cserjesi P."/>
            <person name="Ligon K.L."/>
            <person name="Olson E.N."/>
        </authorList>
    </citation>
    <scope>NUCLEOTIDE SEQUENCE [MRNA]</scope>
    <scope>DEVELOPMENTAL STAGE</scope>
    <source>
        <strain>NIH Swiss</strain>
        <tissue>Embryo</tissue>
    </source>
</reference>
<reference key="2">
    <citation type="journal article" date="2004" name="Genome Res.">
        <title>The status, quality, and expansion of the NIH full-length cDNA project: the Mammalian Gene Collection (MGC).</title>
        <authorList>
            <consortium name="The MGC Project Team"/>
        </authorList>
    </citation>
    <scope>NUCLEOTIDE SEQUENCE [LARGE SCALE MRNA]</scope>
    <source>
        <tissue>Lung</tissue>
    </source>
</reference>
<reference key="3">
    <citation type="journal article" date="1995" name="Genomics">
        <title>Genomic organization and chromosomal localization of the gene TCF15 encoding the early mesodermal basic helix-loop-helix factor bHLH-EC2.</title>
        <authorList>
            <person name="Hidai H."/>
            <person name="Quertermous E.E."/>
            <person name="Espinosa R."/>
            <person name="Le Beau M.M."/>
            <person name="Quertermous T."/>
        </authorList>
    </citation>
    <scope>NUCLEOTIDE SEQUENCE [GENOMIC DNA] OF 1-35</scope>
    <source>
        <strain>129/SvJ</strain>
    </source>
</reference>
<reference key="4">
    <citation type="journal article" date="1994" name="Proc. Natl. Acad. Sci. U.S.A.">
        <title>Cloning and characterization of a basic helix-loop-helix protein expressed in early mesoderm and the developing somites.</title>
        <authorList>
            <person name="Quertermous E.E."/>
            <person name="Hidai H."/>
            <person name="Blanar M.A."/>
            <person name="Quertermous T."/>
        </authorList>
    </citation>
    <scope>TISSUE SPECIFICITY</scope>
    <scope>DEVELOPMENTAL STAGE</scope>
</reference>
<reference key="5">
    <citation type="journal article" date="1995" name="Proc. Natl. Acad. Sci. U.S.A.">
        <title>Meso1, a basic-helix-loop-helix protein involved in mammalian presomitic mesoderm development.</title>
        <authorList>
            <person name="Blanar M.A."/>
            <person name="Crossley P.H."/>
            <person name="Peters K.G."/>
            <person name="Steingrimsson E."/>
            <person name="Copeland N.G."/>
            <person name="Jenkins N.A."/>
            <person name="Martin G.R."/>
            <person name="Rutter W.J."/>
        </authorList>
    </citation>
    <scope>FUNCTION</scope>
    <scope>TISSUE SPECIFICITY</scope>
</reference>
<reference key="6">
    <citation type="journal article" date="1996" name="Nature">
        <title>Requirement of the paraxis gene for somite formation and musculoskeletal patterning.</title>
        <authorList>
            <person name="Burgess R."/>
            <person name="Rawls A."/>
            <person name="Brown D."/>
            <person name="Bradley A."/>
            <person name="Olson E.N."/>
        </authorList>
    </citation>
    <scope>FUNCTION</scope>
    <scope>DISRUPTION PHENOTYPE</scope>
</reference>
<reference key="7">
    <citation type="journal article" date="2004" name="J. Biol. Chem.">
        <title>Paraxis is a basic helix-loop-helix protein that positively regulates transcription through binding to specific E-box elements.</title>
        <authorList>
            <person name="Wilson-Rawls J."/>
            <person name="Rhee J.M."/>
            <person name="Rawls A."/>
        </authorList>
    </citation>
    <scope>FUNCTION</scope>
    <scope>DNA-BINDING</scope>
    <scope>INTERACTION WITH TCF3</scope>
    <scope>MUTAGENESIS OF 70-ARG-GLN-71; ALA-75 AND PHE-90</scope>
</reference>
<reference key="8">
    <citation type="journal article" date="2010" name="Cell">
        <title>A tissue-specific atlas of mouse protein phosphorylation and expression.</title>
        <authorList>
            <person name="Huttlin E.L."/>
            <person name="Jedrychowski M.P."/>
            <person name="Elias J.E."/>
            <person name="Goswami T."/>
            <person name="Rad R."/>
            <person name="Beausoleil S.A."/>
            <person name="Villen J."/>
            <person name="Haas W."/>
            <person name="Sowa M.E."/>
            <person name="Gygi S.P."/>
        </authorList>
    </citation>
    <scope>PHOSPHORYLATION [LARGE SCALE ANALYSIS] AT SER-60</scope>
    <scope>IDENTIFICATION BY MASS SPECTROMETRY [LARGE SCALE ANALYSIS]</scope>
    <source>
        <tissue>Brown adipose tissue</tissue>
    </source>
</reference>
<reference key="9">
    <citation type="journal article" date="2013" name="Cell Rep.">
        <title>Tcf15 primes pluripotent cells for differentiation.</title>
        <authorList>
            <person name="Davies O.R."/>
            <person name="Lin C.Y."/>
            <person name="Radzisheuskaya A."/>
            <person name="Zhou X."/>
            <person name="Taube J."/>
            <person name="Blin G."/>
            <person name="Waterhouse A."/>
            <person name="Smith A.J."/>
            <person name="Lowell S."/>
        </authorList>
    </citation>
    <scope>FUNCTION</scope>
    <scope>SUBCELLULAR LOCATION</scope>
    <scope>TISSUE SPECIFICITY</scope>
    <scope>INTERACTION WITH TCF3</scope>
</reference>
<reference key="10">
    <citation type="journal article" date="2013" name="Dev. Dyn.">
        <title>Regulation of mesenchymal-to-epithelial transition by PARAXIS during somitogenesis.</title>
        <authorList>
            <person name="Rowton M."/>
            <person name="Ramos P."/>
            <person name="Anderson D.M."/>
            <person name="Rhee J.M."/>
            <person name="Cunliffe H.E."/>
            <person name="Rawls A."/>
        </authorList>
    </citation>
    <scope>FUNCTION</scope>
</reference>
<reference key="11">
    <citation type="journal article" date="2015" name="Circulation">
        <title>Meox2/Tcf15 heterodimers program the heart capillary endothelium for cardiac fatty acid uptake.</title>
        <authorList>
            <person name="Coppiello G."/>
            <person name="Collantes M."/>
            <person name="Sirerol-Piquer M.S."/>
            <person name="Vandenwijngaert S."/>
            <person name="Schoors S."/>
            <person name="Swinnen M."/>
            <person name="Vandersmissen I."/>
            <person name="Herijgers P."/>
            <person name="Topal B."/>
            <person name="van Loon J."/>
            <person name="Goffin J."/>
            <person name="Prosper F."/>
            <person name="Carmeliet P."/>
            <person name="Garcia-Verdugo J.M."/>
            <person name="Janssens S."/>
            <person name="Penuelas I."/>
            <person name="Aranguren X.L."/>
            <person name="Luttun A."/>
        </authorList>
    </citation>
    <scope>FUNCTION</scope>
    <scope>INTERACTION WITH MEOX2</scope>
</reference>
<reference key="12">
    <citation type="journal article" date="2020" name="Nature">
        <title>Single-cell lineage tracing unveils a role for TCF15 in haematopoiesis.</title>
        <authorList>
            <person name="Rodriguez-Fraticelli A.E."/>
            <person name="Weinreb C."/>
            <person name="Wang S.W."/>
            <person name="Migueles R.P."/>
            <person name="Jankovic M."/>
            <person name="Usart M."/>
            <person name="Klein A.M."/>
            <person name="Lowell S."/>
            <person name="Camargo F.D."/>
        </authorList>
    </citation>
    <scope>FUNCTION</scope>
    <scope>TISSUE SPECIFICITY</scope>
    <scope>DISRUPTION PHENOTYPE</scope>
</reference>
<sequence length="195" mass="20721">MAFALLRPVGAHVLYPDVRLLSEDEENRSESDASDQSFGCCEGLEAARRGPGPGSGRRASNGAGPVVVVRQRQAANARERDRTQSVNTAFTALRTLIPTEPVDRKLSKIETLRLASSYIAHLANVLLLGDAADDGQPCFRAAGGGKSAVPAADGRQPRSICTFCLSNQRKGGSRRDLGGSCLKVRGVAPLRGPRR</sequence>
<name>TCF15_MOUSE</name>
<organism>
    <name type="scientific">Mus musculus</name>
    <name type="common">Mouse</name>
    <dbReference type="NCBI Taxonomy" id="10090"/>
    <lineage>
        <taxon>Eukaryota</taxon>
        <taxon>Metazoa</taxon>
        <taxon>Chordata</taxon>
        <taxon>Craniata</taxon>
        <taxon>Vertebrata</taxon>
        <taxon>Euteleostomi</taxon>
        <taxon>Mammalia</taxon>
        <taxon>Eutheria</taxon>
        <taxon>Euarchontoglires</taxon>
        <taxon>Glires</taxon>
        <taxon>Rodentia</taxon>
        <taxon>Myomorpha</taxon>
        <taxon>Muroidea</taxon>
        <taxon>Muridae</taxon>
        <taxon>Murinae</taxon>
        <taxon>Mus</taxon>
        <taxon>Mus</taxon>
    </lineage>
</organism>
<evidence type="ECO:0000255" key="1">
    <source>
        <dbReference type="PROSITE-ProRule" id="PRU00981"/>
    </source>
</evidence>
<evidence type="ECO:0000256" key="2">
    <source>
        <dbReference type="SAM" id="MobiDB-lite"/>
    </source>
</evidence>
<evidence type="ECO:0000269" key="3">
    <source>
    </source>
</evidence>
<evidence type="ECO:0000269" key="4">
    <source>
    </source>
</evidence>
<evidence type="ECO:0000269" key="5">
    <source>
    </source>
</evidence>
<evidence type="ECO:0000269" key="6">
    <source>
    </source>
</evidence>
<evidence type="ECO:0000269" key="7">
    <source>
    </source>
</evidence>
<evidence type="ECO:0000269" key="8">
    <source>
    </source>
</evidence>
<evidence type="ECO:0000269" key="9">
    <source>
    </source>
</evidence>
<evidence type="ECO:0000269" key="10">
    <source>
    </source>
</evidence>
<evidence type="ECO:0000269" key="11">
    <source>
    </source>
</evidence>
<evidence type="ECO:0000303" key="12">
    <source>
    </source>
</evidence>
<evidence type="ECO:0000303" key="13">
    <source>
    </source>
</evidence>
<evidence type="ECO:0000303" key="14">
    <source>
    </source>
</evidence>
<evidence type="ECO:0000305" key="15"/>
<evidence type="ECO:0000312" key="16">
    <source>
        <dbReference type="MGI" id="MGI:104664"/>
    </source>
</evidence>
<evidence type="ECO:0007744" key="17">
    <source>
    </source>
</evidence>
<accession>Q60756</accession>
<accession>Q60788</accession>
<keyword id="KW-0010">Activator</keyword>
<keyword id="KW-0217">Developmental protein</keyword>
<keyword id="KW-0221">Differentiation</keyword>
<keyword id="KW-0238">DNA-binding</keyword>
<keyword id="KW-0539">Nucleus</keyword>
<keyword id="KW-0597">Phosphoprotein</keyword>
<keyword id="KW-1185">Reference proteome</keyword>
<keyword id="KW-0804">Transcription</keyword>
<keyword id="KW-0805">Transcription regulation</keyword>
<comment type="function">
    <text evidence="3 4 5 6 7 8 11">Early transcription factor that plays a key role in somitogenesis, paraxial mesoderm development and regulation of stem cell pluripotency (PubMed:23395635, PubMed:24038871, PubMed:32669716, PubMed:7597044, PubMed:8955271). Essential for the mesenchymal to epithelial transition associated with somite formation (PubMed:24038871, PubMed:7597044, PubMed:8955271). Required for somite morphogenesis, thereby regulating patterning of the axial skeleton and skeletal muscles (PubMed:8955271). Required for proper localization of somite epithelium markers during the mesenchymal to epithelial transition (PubMed:24038871). Also plays a key role in regulation of stem cell pluripotency (PubMed:23395635, PubMed:32669716). Promotes pluripotency exit of embryonic stem cells (ESCs) by priming ESCs for differentiation (PubMed:23395635). Acts as a key regulator of self-renewal of hematopoietic stem cells (HSCs) by mediating HSCs quiescence and long-term self-renewal (PubMed:32669716). Together with MEOX2, regulates transcription in heart endothelial cells to regulate fatty acid transport across heart endothelial cells (PubMed:25561514). Acts by forming a heterodimer with another helix-loop-helix (bHLH) protein, such as TCF3/E12, that binds DNA on E-box motifs (5'-CANNTG-3') and activates transcription of target genes (PubMed:15226298, PubMed:23395635).</text>
</comment>
<comment type="subunit">
    <text evidence="3 4 6">Heterodimer; efficient DNA binding requires dimerization with another bHLH protein, such as TCF3/E12 (PubMed:15226298, PubMed:23395635). Interacts with MEOX2 (PubMed:25561514).</text>
</comment>
<comment type="subcellular location">
    <subcellularLocation>
        <location evidence="1 4">Nucleus</location>
    </subcellularLocation>
</comment>
<comment type="tissue specificity">
    <text evidence="4 7 8 10">Expressed in heart and skeletal muscle (PubMed:7597044, PubMed:8041747). Specifically expressed in a subpopulation of embryonic stem cells (ESCs), that are still undifferentiated but primed for ifferentiation (PubMed:23395635). Expressed in hematopoietic stem cells (HSCs) (PubMed:32669716).</text>
</comment>
<comment type="developmental stage">
    <text evidence="4 9 10">Expressed in the embryonic day 4.5 embryo (PubMed:23395635). Expressed in paraxial mesoderm and developing somites (PubMed:7729571). At 7.5 dpc, low expression is detected in a subdomain of the primitive mesoderm (PubMed:8041747). At 8.5 dpc, expressed at high levels throughout the uncompartmentalized epithelial somites and in the rostral paraxial mesoderm (PubMed:8041747). By 9.5 dpc, expression is confined to the somite and is most prominent in the myotome and dermatome (PubMed:8041747). At 10 dpc, expression in somite declines in the myotome but persists at high level in the dermatome (PubMed:8041747). At 10.5 dpc, expression is seen only in the somites in the caudal portion of the embryo (PubMed:8041747).</text>
</comment>
<comment type="disruption phenotype">
    <text evidence="7 11">Lethality within an hour of birth, possibly caused by rib defects that lead to respiratory distress (PubMed:8955271). At birth, neonates display obvious caudal agenesis with tails that are shortened and curled (PubMed:8955271). They also lack the normal cervical flexure of the vertebral column, and their hindlimbs are curved towards the midline (PubMed:8955271). Neonates also display low-set ears, a thickened neck and loose skin (PubMed:8955271). Defects are caused by impaired formation of somites: cells from the paraxial mesoderm are unable to form epithelia, preventing formation of somites (PubMed:8955271). In the absence of normal somites, the axial skeleton and skeletal muscle form but are improperly patterned (PubMed:8955271). Hematopoietic stem cells (HSCs) show a specific loss of quiescent stem cells (PubMed:32669716).</text>
</comment>
<gene>
    <name evidence="14 16" type="primary">Tcf15</name>
    <name evidence="14" type="synonym">Bhlhec2</name>
</gene>
<protein>
    <recommendedName>
        <fullName evidence="14">Transcription factor 15</fullName>
        <shortName evidence="14">TCF-15</shortName>
    </recommendedName>
    <alternativeName>
        <fullName evidence="12">Meso1</fullName>
    </alternativeName>
    <alternativeName>
        <fullName evidence="13">Paraxis</fullName>
    </alternativeName>
    <alternativeName>
        <fullName evidence="14">Protein bHLH-EC2</fullName>
    </alternativeName>
</protein>
<proteinExistence type="evidence at protein level"/>